<sequence length="458" mass="49569">MSTGTVVQVIGAVVDVEFPHDAVPQVYDALEIKSEGLVLEVQQQLGGGVVRTIAMGSSDGLRRGLEVVNSGSPITVPVGEKTLGRIMNVLGQPVDEAGPIGEEDRYVIHREAPSYEDQSNTTELLETGIKVIDLVCPFAKGGKVGLFGGAGVGKTVNMMELINNIAKAHSGLSVFAGVGERTREGNDFYYEMEDSGVLDKVAMVYGQMNEPPGNRLRVALTGLTMAEKFRDEGKDVLFFVDNIYRYTLAGTEVSALLGRMPSAVGYQPTLAEEMGVLQERITSTKTGSITSVQAVYVPADDLTDPSPATTFAHLDATVVLSRNIASLGIYPAVDPLDSTSRQLDPQVVGQEHYDVANGVQTVLQRYKELKDIIAILGMDELSDEDKTTVFRARKIEKYLSQPFFVAEVFTGSPGKYVSLKDTIRGFKGILDGEFDHLPEQAFYMVGSIDEAVEKANKK</sequence>
<proteinExistence type="inferred from homology"/>
<protein>
    <recommendedName>
        <fullName evidence="1">ATP synthase subunit beta</fullName>
        <ecNumber evidence="1">7.1.2.2</ecNumber>
    </recommendedName>
    <alternativeName>
        <fullName evidence="1">ATP synthase F1 sector subunit beta</fullName>
    </alternativeName>
    <alternativeName>
        <fullName evidence="1">F-ATPase subunit beta</fullName>
    </alternativeName>
</protein>
<gene>
    <name evidence="1" type="primary">atpD</name>
    <name type="ordered locus">swp_5156</name>
</gene>
<comment type="function">
    <text evidence="1">Produces ATP from ADP in the presence of a proton gradient across the membrane. The catalytic sites are hosted primarily by the beta subunits.</text>
</comment>
<comment type="catalytic activity">
    <reaction evidence="1">
        <text>ATP + H2O + 4 H(+)(in) = ADP + phosphate + 5 H(+)(out)</text>
        <dbReference type="Rhea" id="RHEA:57720"/>
        <dbReference type="ChEBI" id="CHEBI:15377"/>
        <dbReference type="ChEBI" id="CHEBI:15378"/>
        <dbReference type="ChEBI" id="CHEBI:30616"/>
        <dbReference type="ChEBI" id="CHEBI:43474"/>
        <dbReference type="ChEBI" id="CHEBI:456216"/>
        <dbReference type="EC" id="7.1.2.2"/>
    </reaction>
</comment>
<comment type="subunit">
    <text evidence="1">F-type ATPases have 2 components, CF(1) - the catalytic core - and CF(0) - the membrane proton channel. CF(1) has five subunits: alpha(3), beta(3), gamma(1), delta(1), epsilon(1). CF(0) has three main subunits: a(1), b(2) and c(9-12). The alpha and beta chains form an alternating ring which encloses part of the gamma chain. CF(1) is attached to CF(0) by a central stalk formed by the gamma and epsilon chains, while a peripheral stalk is formed by the delta and b chains.</text>
</comment>
<comment type="subcellular location">
    <subcellularLocation>
        <location evidence="1">Cell inner membrane</location>
        <topology evidence="1">Peripheral membrane protein</topology>
    </subcellularLocation>
</comment>
<comment type="similarity">
    <text evidence="1">Belongs to the ATPase alpha/beta chains family.</text>
</comment>
<name>ATPB_SHEPW</name>
<keyword id="KW-0066">ATP synthesis</keyword>
<keyword id="KW-0067">ATP-binding</keyword>
<keyword id="KW-0997">Cell inner membrane</keyword>
<keyword id="KW-1003">Cell membrane</keyword>
<keyword id="KW-0139">CF(1)</keyword>
<keyword id="KW-0375">Hydrogen ion transport</keyword>
<keyword id="KW-0406">Ion transport</keyword>
<keyword id="KW-0472">Membrane</keyword>
<keyword id="KW-0547">Nucleotide-binding</keyword>
<keyword id="KW-1278">Translocase</keyword>
<keyword id="KW-0813">Transport</keyword>
<organism>
    <name type="scientific">Shewanella piezotolerans (strain WP3 / JCM 13877)</name>
    <dbReference type="NCBI Taxonomy" id="225849"/>
    <lineage>
        <taxon>Bacteria</taxon>
        <taxon>Pseudomonadati</taxon>
        <taxon>Pseudomonadota</taxon>
        <taxon>Gammaproteobacteria</taxon>
        <taxon>Alteromonadales</taxon>
        <taxon>Shewanellaceae</taxon>
        <taxon>Shewanella</taxon>
    </lineage>
</organism>
<dbReference type="EC" id="7.1.2.2" evidence="1"/>
<dbReference type="EMBL" id="CP000472">
    <property type="protein sequence ID" value="ACJ31771.1"/>
    <property type="molecule type" value="Genomic_DNA"/>
</dbReference>
<dbReference type="RefSeq" id="WP_020915095.1">
    <property type="nucleotide sequence ID" value="NC_011566.1"/>
</dbReference>
<dbReference type="SMR" id="B8CVU5"/>
<dbReference type="STRING" id="225849.swp_5156"/>
<dbReference type="KEGG" id="swp:swp_5156"/>
<dbReference type="eggNOG" id="COG0055">
    <property type="taxonomic scope" value="Bacteria"/>
</dbReference>
<dbReference type="HOGENOM" id="CLU_022398_0_2_6"/>
<dbReference type="OrthoDB" id="9801639at2"/>
<dbReference type="Proteomes" id="UP000000753">
    <property type="component" value="Chromosome"/>
</dbReference>
<dbReference type="GO" id="GO:0005886">
    <property type="term" value="C:plasma membrane"/>
    <property type="evidence" value="ECO:0007669"/>
    <property type="project" value="UniProtKB-SubCell"/>
</dbReference>
<dbReference type="GO" id="GO:0045259">
    <property type="term" value="C:proton-transporting ATP synthase complex"/>
    <property type="evidence" value="ECO:0007669"/>
    <property type="project" value="UniProtKB-KW"/>
</dbReference>
<dbReference type="GO" id="GO:0005524">
    <property type="term" value="F:ATP binding"/>
    <property type="evidence" value="ECO:0007669"/>
    <property type="project" value="UniProtKB-UniRule"/>
</dbReference>
<dbReference type="GO" id="GO:0016887">
    <property type="term" value="F:ATP hydrolysis activity"/>
    <property type="evidence" value="ECO:0007669"/>
    <property type="project" value="InterPro"/>
</dbReference>
<dbReference type="GO" id="GO:0046933">
    <property type="term" value="F:proton-transporting ATP synthase activity, rotational mechanism"/>
    <property type="evidence" value="ECO:0007669"/>
    <property type="project" value="UniProtKB-UniRule"/>
</dbReference>
<dbReference type="CDD" id="cd18110">
    <property type="entry name" value="ATP-synt_F1_beta_C"/>
    <property type="match status" value="1"/>
</dbReference>
<dbReference type="CDD" id="cd18115">
    <property type="entry name" value="ATP-synt_F1_beta_N"/>
    <property type="match status" value="1"/>
</dbReference>
<dbReference type="CDD" id="cd01133">
    <property type="entry name" value="F1-ATPase_beta_CD"/>
    <property type="match status" value="1"/>
</dbReference>
<dbReference type="FunFam" id="1.10.1140.10:FF:000001">
    <property type="entry name" value="ATP synthase subunit beta"/>
    <property type="match status" value="1"/>
</dbReference>
<dbReference type="FunFam" id="2.40.10.170:FF:000003">
    <property type="entry name" value="ATP synthase subunit beta"/>
    <property type="match status" value="1"/>
</dbReference>
<dbReference type="FunFam" id="3.40.50.300:FF:000004">
    <property type="entry name" value="ATP synthase subunit beta"/>
    <property type="match status" value="1"/>
</dbReference>
<dbReference type="Gene3D" id="2.40.10.170">
    <property type="match status" value="1"/>
</dbReference>
<dbReference type="Gene3D" id="1.10.1140.10">
    <property type="entry name" value="Bovine Mitochondrial F1-atpase, Atp Synthase Beta Chain, Chain D, domain 3"/>
    <property type="match status" value="1"/>
</dbReference>
<dbReference type="Gene3D" id="3.40.50.300">
    <property type="entry name" value="P-loop containing nucleotide triphosphate hydrolases"/>
    <property type="match status" value="1"/>
</dbReference>
<dbReference type="HAMAP" id="MF_01347">
    <property type="entry name" value="ATP_synth_beta_bact"/>
    <property type="match status" value="1"/>
</dbReference>
<dbReference type="InterPro" id="IPR003593">
    <property type="entry name" value="AAA+_ATPase"/>
</dbReference>
<dbReference type="InterPro" id="IPR055190">
    <property type="entry name" value="ATP-synt_VA_C"/>
</dbReference>
<dbReference type="InterPro" id="IPR005722">
    <property type="entry name" value="ATP_synth_F1_bsu"/>
</dbReference>
<dbReference type="InterPro" id="IPR020003">
    <property type="entry name" value="ATPase_a/bsu_AS"/>
</dbReference>
<dbReference type="InterPro" id="IPR050053">
    <property type="entry name" value="ATPase_alpha/beta_chains"/>
</dbReference>
<dbReference type="InterPro" id="IPR004100">
    <property type="entry name" value="ATPase_F1/V1/A1_a/bsu_N"/>
</dbReference>
<dbReference type="InterPro" id="IPR036121">
    <property type="entry name" value="ATPase_F1/V1/A1_a/bsu_N_sf"/>
</dbReference>
<dbReference type="InterPro" id="IPR000194">
    <property type="entry name" value="ATPase_F1/V1/A1_a/bsu_nucl-bd"/>
</dbReference>
<dbReference type="InterPro" id="IPR024034">
    <property type="entry name" value="ATPase_F1/V1_b/a_C"/>
</dbReference>
<dbReference type="InterPro" id="IPR027417">
    <property type="entry name" value="P-loop_NTPase"/>
</dbReference>
<dbReference type="NCBIfam" id="TIGR01039">
    <property type="entry name" value="atpD"/>
    <property type="match status" value="1"/>
</dbReference>
<dbReference type="PANTHER" id="PTHR15184">
    <property type="entry name" value="ATP SYNTHASE"/>
    <property type="match status" value="1"/>
</dbReference>
<dbReference type="PANTHER" id="PTHR15184:SF71">
    <property type="entry name" value="ATP SYNTHASE SUBUNIT BETA, MITOCHONDRIAL"/>
    <property type="match status" value="1"/>
</dbReference>
<dbReference type="Pfam" id="PF00006">
    <property type="entry name" value="ATP-synt_ab"/>
    <property type="match status" value="1"/>
</dbReference>
<dbReference type="Pfam" id="PF02874">
    <property type="entry name" value="ATP-synt_ab_N"/>
    <property type="match status" value="1"/>
</dbReference>
<dbReference type="Pfam" id="PF22919">
    <property type="entry name" value="ATP-synt_VA_C"/>
    <property type="match status" value="1"/>
</dbReference>
<dbReference type="SMART" id="SM00382">
    <property type="entry name" value="AAA"/>
    <property type="match status" value="1"/>
</dbReference>
<dbReference type="SUPFAM" id="SSF47917">
    <property type="entry name" value="C-terminal domain of alpha and beta subunits of F1 ATP synthase"/>
    <property type="match status" value="1"/>
</dbReference>
<dbReference type="SUPFAM" id="SSF50615">
    <property type="entry name" value="N-terminal domain of alpha and beta subunits of F1 ATP synthase"/>
    <property type="match status" value="1"/>
</dbReference>
<dbReference type="SUPFAM" id="SSF52540">
    <property type="entry name" value="P-loop containing nucleoside triphosphate hydrolases"/>
    <property type="match status" value="1"/>
</dbReference>
<dbReference type="PROSITE" id="PS00152">
    <property type="entry name" value="ATPASE_ALPHA_BETA"/>
    <property type="match status" value="1"/>
</dbReference>
<reference key="1">
    <citation type="journal article" date="2008" name="PLoS ONE">
        <title>Environmental adaptation: genomic analysis of the piezotolerant and psychrotolerant deep-sea iron reducing bacterium Shewanella piezotolerans WP3.</title>
        <authorList>
            <person name="Wang F."/>
            <person name="Wang J."/>
            <person name="Jian H."/>
            <person name="Zhang B."/>
            <person name="Li S."/>
            <person name="Wang F."/>
            <person name="Zeng X."/>
            <person name="Gao L."/>
            <person name="Bartlett D.H."/>
            <person name="Yu J."/>
            <person name="Hu S."/>
            <person name="Xiao X."/>
        </authorList>
    </citation>
    <scope>NUCLEOTIDE SEQUENCE [LARGE SCALE GENOMIC DNA]</scope>
    <source>
        <strain>WP3 / JCM 13877</strain>
    </source>
</reference>
<feature type="chain" id="PRO_1000143545" description="ATP synthase subunit beta">
    <location>
        <begin position="1"/>
        <end position="458"/>
    </location>
</feature>
<feature type="binding site" evidence="1">
    <location>
        <begin position="148"/>
        <end position="155"/>
    </location>
    <ligand>
        <name>ATP</name>
        <dbReference type="ChEBI" id="CHEBI:30616"/>
    </ligand>
</feature>
<evidence type="ECO:0000255" key="1">
    <source>
        <dbReference type="HAMAP-Rule" id="MF_01347"/>
    </source>
</evidence>
<accession>B8CVU5</accession>